<keyword id="KW-0012">Acyltransferase</keyword>
<keyword id="KW-0963">Cytoplasm</keyword>
<keyword id="KW-0408">Iron</keyword>
<keyword id="KW-0479">Metal-binding</keyword>
<keyword id="KW-1185">Reference proteome</keyword>
<keyword id="KW-0808">Transferase</keyword>
<keyword id="KW-0819">tRNA processing</keyword>
<dbReference type="EC" id="2.3.1.234" evidence="1"/>
<dbReference type="EMBL" id="FM180568">
    <property type="protein sequence ID" value="CAS10905.1"/>
    <property type="molecule type" value="Genomic_DNA"/>
</dbReference>
<dbReference type="RefSeq" id="WP_001264355.1">
    <property type="nucleotide sequence ID" value="NC_011601.1"/>
</dbReference>
<dbReference type="SMR" id="B7UIX2"/>
<dbReference type="KEGG" id="ecg:E2348C_3357"/>
<dbReference type="HOGENOM" id="CLU_023208_0_2_6"/>
<dbReference type="Proteomes" id="UP000008205">
    <property type="component" value="Chromosome"/>
</dbReference>
<dbReference type="GO" id="GO:0005737">
    <property type="term" value="C:cytoplasm"/>
    <property type="evidence" value="ECO:0007669"/>
    <property type="project" value="UniProtKB-SubCell"/>
</dbReference>
<dbReference type="GO" id="GO:0005506">
    <property type="term" value="F:iron ion binding"/>
    <property type="evidence" value="ECO:0007669"/>
    <property type="project" value="UniProtKB-UniRule"/>
</dbReference>
<dbReference type="GO" id="GO:0061711">
    <property type="term" value="F:N(6)-L-threonylcarbamoyladenine synthase activity"/>
    <property type="evidence" value="ECO:0007669"/>
    <property type="project" value="UniProtKB-EC"/>
</dbReference>
<dbReference type="GO" id="GO:0002949">
    <property type="term" value="P:tRNA threonylcarbamoyladenosine modification"/>
    <property type="evidence" value="ECO:0007669"/>
    <property type="project" value="UniProtKB-UniRule"/>
</dbReference>
<dbReference type="CDD" id="cd24097">
    <property type="entry name" value="ASKHA_NBD_TsaD-like"/>
    <property type="match status" value="1"/>
</dbReference>
<dbReference type="FunFam" id="3.30.420.40:FF:000031">
    <property type="entry name" value="tRNA N6-adenosine threonylcarbamoyltransferase"/>
    <property type="match status" value="1"/>
</dbReference>
<dbReference type="Gene3D" id="3.30.420.40">
    <property type="match status" value="2"/>
</dbReference>
<dbReference type="HAMAP" id="MF_01445">
    <property type="entry name" value="TsaD"/>
    <property type="match status" value="1"/>
</dbReference>
<dbReference type="InterPro" id="IPR043129">
    <property type="entry name" value="ATPase_NBD"/>
</dbReference>
<dbReference type="InterPro" id="IPR000905">
    <property type="entry name" value="Gcp-like_dom"/>
</dbReference>
<dbReference type="InterPro" id="IPR017861">
    <property type="entry name" value="KAE1/TsaD"/>
</dbReference>
<dbReference type="InterPro" id="IPR017860">
    <property type="entry name" value="Peptidase_M22_CS"/>
</dbReference>
<dbReference type="InterPro" id="IPR022450">
    <property type="entry name" value="TsaD"/>
</dbReference>
<dbReference type="NCBIfam" id="TIGR00329">
    <property type="entry name" value="gcp_kae1"/>
    <property type="match status" value="1"/>
</dbReference>
<dbReference type="NCBIfam" id="TIGR03723">
    <property type="entry name" value="T6A_TsaD_YgjD"/>
    <property type="match status" value="1"/>
</dbReference>
<dbReference type="PANTHER" id="PTHR11735">
    <property type="entry name" value="TRNA N6-ADENOSINE THREONYLCARBAMOYLTRANSFERASE"/>
    <property type="match status" value="1"/>
</dbReference>
<dbReference type="PANTHER" id="PTHR11735:SF6">
    <property type="entry name" value="TRNA N6-ADENOSINE THREONYLCARBAMOYLTRANSFERASE, MITOCHONDRIAL"/>
    <property type="match status" value="1"/>
</dbReference>
<dbReference type="Pfam" id="PF00814">
    <property type="entry name" value="TsaD"/>
    <property type="match status" value="1"/>
</dbReference>
<dbReference type="PRINTS" id="PR00789">
    <property type="entry name" value="OSIALOPTASE"/>
</dbReference>
<dbReference type="SUPFAM" id="SSF53067">
    <property type="entry name" value="Actin-like ATPase domain"/>
    <property type="match status" value="1"/>
</dbReference>
<dbReference type="PROSITE" id="PS01016">
    <property type="entry name" value="GLYCOPROTEASE"/>
    <property type="match status" value="1"/>
</dbReference>
<comment type="function">
    <text evidence="1">Required for the formation of a threonylcarbamoyl group on adenosine at position 37 (t(6)A37) in tRNAs that read codons beginning with adenine. Is involved in the transfer of the threonylcarbamoyl moiety of threonylcarbamoyl-AMP (TC-AMP) to the N6 group of A37, together with TsaE and TsaB. TsaD likely plays a direct catalytic role in this reaction.</text>
</comment>
<comment type="catalytic activity">
    <reaction evidence="1">
        <text>L-threonylcarbamoyladenylate + adenosine(37) in tRNA = N(6)-L-threonylcarbamoyladenosine(37) in tRNA + AMP + H(+)</text>
        <dbReference type="Rhea" id="RHEA:37059"/>
        <dbReference type="Rhea" id="RHEA-COMP:10162"/>
        <dbReference type="Rhea" id="RHEA-COMP:10163"/>
        <dbReference type="ChEBI" id="CHEBI:15378"/>
        <dbReference type="ChEBI" id="CHEBI:73682"/>
        <dbReference type="ChEBI" id="CHEBI:74411"/>
        <dbReference type="ChEBI" id="CHEBI:74418"/>
        <dbReference type="ChEBI" id="CHEBI:456215"/>
        <dbReference type="EC" id="2.3.1.234"/>
    </reaction>
</comment>
<comment type="cofactor">
    <cofactor evidence="1">
        <name>Fe(2+)</name>
        <dbReference type="ChEBI" id="CHEBI:29033"/>
    </cofactor>
    <text evidence="1">Binds 1 Fe(2+) ion per subunit.</text>
</comment>
<comment type="subcellular location">
    <subcellularLocation>
        <location evidence="1">Cytoplasm</location>
    </subcellularLocation>
</comment>
<comment type="similarity">
    <text evidence="1">Belongs to the KAE1 / TsaD family.</text>
</comment>
<protein>
    <recommendedName>
        <fullName evidence="1">tRNA N6-adenosine threonylcarbamoyltransferase</fullName>
        <ecNumber evidence="1">2.3.1.234</ecNumber>
    </recommendedName>
    <alternativeName>
        <fullName evidence="1">N6-L-threonylcarbamoyladenine synthase</fullName>
        <shortName evidence="1">t(6)A synthase</shortName>
    </alternativeName>
    <alternativeName>
        <fullName evidence="1">t(6)A37 threonylcarbamoyladenosine biosynthesis protein TsaD</fullName>
    </alternativeName>
    <alternativeName>
        <fullName evidence="1">tRNA threonylcarbamoyladenosine biosynthesis protein TsaD</fullName>
    </alternativeName>
</protein>
<sequence length="337" mass="36022">MRVLGIETSCDETGIAIYDDEKGLLANQLYSQVKLHADYGGVVPELASRDHVRKTVPLIQAALKESGLTAKDIDAVAYTAGPGLVGALLVGATVGRSLAFAWDVPAIPVHHMEGHLLAPMLEDNPPEFPFVALLVSGGHTQLISVTGIGQYELLGESIDDAAGEAFDKTAKLLGLDYPGGPLLSKMAAQGTAGRFVFPRPMTDRPGLDFSFSGLKTFAANTIRDNGTDDQTRADIARAFEDAVVDTLMIKCKRALEQTGFKRLVMAGGVSANRTLRAKLAEMMKKRRGEVFYARPEFCTDNGAMIAYAGMVRFKAGATADLGVSVRPRWPLAELPAA</sequence>
<name>TSAD_ECO27</name>
<gene>
    <name evidence="1" type="primary">tsaD</name>
    <name type="synonym">gcp</name>
    <name type="ordered locus">E2348C_3357</name>
</gene>
<organism>
    <name type="scientific">Escherichia coli O127:H6 (strain E2348/69 / EPEC)</name>
    <dbReference type="NCBI Taxonomy" id="574521"/>
    <lineage>
        <taxon>Bacteria</taxon>
        <taxon>Pseudomonadati</taxon>
        <taxon>Pseudomonadota</taxon>
        <taxon>Gammaproteobacteria</taxon>
        <taxon>Enterobacterales</taxon>
        <taxon>Enterobacteriaceae</taxon>
        <taxon>Escherichia</taxon>
    </lineage>
</organism>
<reference key="1">
    <citation type="journal article" date="2009" name="J. Bacteriol.">
        <title>Complete genome sequence and comparative genome analysis of enteropathogenic Escherichia coli O127:H6 strain E2348/69.</title>
        <authorList>
            <person name="Iguchi A."/>
            <person name="Thomson N.R."/>
            <person name="Ogura Y."/>
            <person name="Saunders D."/>
            <person name="Ooka T."/>
            <person name="Henderson I.R."/>
            <person name="Harris D."/>
            <person name="Asadulghani M."/>
            <person name="Kurokawa K."/>
            <person name="Dean P."/>
            <person name="Kenny B."/>
            <person name="Quail M.A."/>
            <person name="Thurston S."/>
            <person name="Dougan G."/>
            <person name="Hayashi T."/>
            <person name="Parkhill J."/>
            <person name="Frankel G."/>
        </authorList>
    </citation>
    <scope>NUCLEOTIDE SEQUENCE [LARGE SCALE GENOMIC DNA]</scope>
    <source>
        <strain>E2348/69 / EPEC</strain>
    </source>
</reference>
<accession>B7UIX2</accession>
<proteinExistence type="inferred from homology"/>
<feature type="chain" id="PRO_1000184963" description="tRNA N6-adenosine threonylcarbamoyltransferase">
    <location>
        <begin position="1"/>
        <end position="337"/>
    </location>
</feature>
<feature type="binding site" evidence="1">
    <location>
        <position position="111"/>
    </location>
    <ligand>
        <name>Fe cation</name>
        <dbReference type="ChEBI" id="CHEBI:24875"/>
    </ligand>
</feature>
<feature type="binding site" evidence="1">
    <location>
        <position position="115"/>
    </location>
    <ligand>
        <name>Fe cation</name>
        <dbReference type="ChEBI" id="CHEBI:24875"/>
    </ligand>
</feature>
<feature type="binding site" evidence="1">
    <location>
        <begin position="134"/>
        <end position="138"/>
    </location>
    <ligand>
        <name>substrate</name>
    </ligand>
</feature>
<feature type="binding site" evidence="1">
    <location>
        <position position="167"/>
    </location>
    <ligand>
        <name>substrate</name>
    </ligand>
</feature>
<feature type="binding site" evidence="1">
    <location>
        <position position="180"/>
    </location>
    <ligand>
        <name>substrate</name>
    </ligand>
</feature>
<feature type="binding site" evidence="1">
    <location>
        <position position="272"/>
    </location>
    <ligand>
        <name>substrate</name>
    </ligand>
</feature>
<feature type="binding site" evidence="1">
    <location>
        <position position="300"/>
    </location>
    <ligand>
        <name>Fe cation</name>
        <dbReference type="ChEBI" id="CHEBI:24875"/>
    </ligand>
</feature>
<evidence type="ECO:0000255" key="1">
    <source>
        <dbReference type="HAMAP-Rule" id="MF_01445"/>
    </source>
</evidence>